<protein>
    <recommendedName>
        <fullName evidence="11">Protein sidekick-2</fullName>
    </recommendedName>
</protein>
<feature type="signal peptide" evidence="2">
    <location>
        <begin position="1"/>
        <end position="24"/>
    </location>
</feature>
<feature type="chain" id="PRO_0000226979" description="Protein sidekick-2">
    <location>
        <begin position="25"/>
        <end position="2176"/>
    </location>
</feature>
<feature type="topological domain" description="Extracellular" evidence="2">
    <location>
        <begin position="25"/>
        <end position="1936"/>
    </location>
</feature>
<feature type="transmembrane region" description="Helical" evidence="2">
    <location>
        <begin position="1937"/>
        <end position="1957"/>
    </location>
</feature>
<feature type="topological domain" description="Cytoplasmic" evidence="2">
    <location>
        <begin position="1958"/>
        <end position="2176"/>
    </location>
</feature>
<feature type="domain" description="Ig-like C2-type 1">
    <location>
        <begin position="30"/>
        <end position="112"/>
    </location>
</feature>
<feature type="domain" description="Ig-like C2-type 2">
    <location>
        <begin position="117"/>
        <end position="204"/>
    </location>
</feature>
<feature type="domain" description="Ig-like C2-type 3">
    <location>
        <begin position="219"/>
        <end position="298"/>
    </location>
</feature>
<feature type="domain" description="Ig-like C2-type 4">
    <location>
        <begin position="312"/>
        <end position="402"/>
    </location>
</feature>
<feature type="domain" description="Ig-like C2-type 5">
    <location>
        <begin position="406"/>
        <end position="495"/>
    </location>
</feature>
<feature type="domain" description="Ig-like C2-type 6">
    <location>
        <begin position="500"/>
        <end position="589"/>
    </location>
</feature>
<feature type="domain" description="Fibronectin type-III 1" evidence="4">
    <location>
        <begin position="596"/>
        <end position="692"/>
    </location>
</feature>
<feature type="domain" description="Fibronectin type-III 2" evidence="4">
    <location>
        <begin position="697"/>
        <end position="793"/>
    </location>
</feature>
<feature type="domain" description="Fibronectin type-III 3" evidence="4">
    <location>
        <begin position="798"/>
        <end position="897"/>
    </location>
</feature>
<feature type="domain" description="Fibronectin type-III 4" evidence="4">
    <location>
        <begin position="901"/>
        <end position="995"/>
    </location>
</feature>
<feature type="domain" description="Fibronectin type-III 5" evidence="4">
    <location>
        <begin position="999"/>
        <end position="1098"/>
    </location>
</feature>
<feature type="domain" description="Fibronectin type-III 6" evidence="4">
    <location>
        <begin position="1103"/>
        <end position="1201"/>
    </location>
</feature>
<feature type="domain" description="Fibronectin type-III 7" evidence="4">
    <location>
        <begin position="1206"/>
        <end position="1303"/>
    </location>
</feature>
<feature type="domain" description="Fibronectin type-III 8" evidence="4">
    <location>
        <begin position="1307"/>
        <end position="1401"/>
    </location>
</feature>
<feature type="domain" description="Fibronectin type-III 9" evidence="4">
    <location>
        <begin position="1406"/>
        <end position="1503"/>
    </location>
</feature>
<feature type="domain" description="Fibronectin type-III 10" evidence="4">
    <location>
        <begin position="1508"/>
        <end position="1625"/>
    </location>
</feature>
<feature type="domain" description="Fibronectin type-III 11" evidence="4">
    <location>
        <begin position="1630"/>
        <end position="1726"/>
    </location>
</feature>
<feature type="domain" description="Fibronectin type-III 12" evidence="4">
    <location>
        <begin position="1730"/>
        <end position="1825"/>
    </location>
</feature>
<feature type="domain" description="Fibronectin type-III 13" evidence="4">
    <location>
        <begin position="1828"/>
        <end position="1930"/>
    </location>
</feature>
<feature type="region of interest" description="Disordered" evidence="5">
    <location>
        <begin position="1712"/>
        <end position="1734"/>
    </location>
</feature>
<feature type="region of interest" description="Disordered" evidence="5">
    <location>
        <begin position="2013"/>
        <end position="2032"/>
    </location>
</feature>
<feature type="region of interest" description="Disordered" evidence="5">
    <location>
        <begin position="2043"/>
        <end position="2070"/>
    </location>
</feature>
<feature type="region of interest" description="Disordered" evidence="5">
    <location>
        <begin position="2102"/>
        <end position="2176"/>
    </location>
</feature>
<feature type="short sequence motif" description="PDZ-binding" evidence="8">
    <location>
        <begin position="2170"/>
        <end position="2176"/>
    </location>
</feature>
<feature type="compositionally biased region" description="Polar residues" evidence="5">
    <location>
        <begin position="1716"/>
        <end position="1727"/>
    </location>
</feature>
<feature type="compositionally biased region" description="Polar residues" evidence="5">
    <location>
        <begin position="2044"/>
        <end position="2070"/>
    </location>
</feature>
<feature type="compositionally biased region" description="Polar residues" evidence="5">
    <location>
        <begin position="2119"/>
        <end position="2129"/>
    </location>
</feature>
<feature type="glycosylation site" description="N-linked (GlcNAc...) asparagine" evidence="2">
    <location>
        <position position="197"/>
    </location>
</feature>
<feature type="glycosylation site" description="N-linked (GlcNAc...) asparagine" evidence="2">
    <location>
        <position position="747"/>
    </location>
</feature>
<feature type="glycosylation site" description="N-linked (GlcNAc...) asparagine" evidence="2">
    <location>
        <position position="940"/>
    </location>
</feature>
<feature type="glycosylation site" description="N-linked (GlcNAc...) asparagine" evidence="2">
    <location>
        <position position="952"/>
    </location>
</feature>
<feature type="glycosylation site" description="N-linked (GlcNAc...) asparagine" evidence="2">
    <location>
        <position position="1106"/>
    </location>
</feature>
<feature type="glycosylation site" description="N-linked (GlcNAc...) asparagine" evidence="2">
    <location>
        <position position="1592"/>
    </location>
</feature>
<feature type="disulfide bond" evidence="3">
    <location>
        <begin position="52"/>
        <end position="95"/>
    </location>
</feature>
<feature type="disulfide bond" evidence="3">
    <location>
        <begin position="241"/>
        <end position="288"/>
    </location>
</feature>
<feature type="disulfide bond" evidence="3">
    <location>
        <begin position="334"/>
        <end position="384"/>
    </location>
</feature>
<feature type="disulfide bond" evidence="3">
    <location>
        <begin position="427"/>
        <end position="479"/>
    </location>
</feature>
<feature type="disulfide bond" evidence="3">
    <location>
        <begin position="521"/>
        <end position="573"/>
    </location>
</feature>
<feature type="splice variant" id="VSP_017526" description="In isoform 2." evidence="13">
    <location>
        <begin position="1"/>
        <end position="1602"/>
    </location>
</feature>
<feature type="splice variant" id="VSP_017527" description="In isoform 3." evidence="12">
    <original>VWEKDGATL</original>
    <variation>SMQSGKGRL</variation>
    <location>
        <begin position="534"/>
        <end position="542"/>
    </location>
</feature>
<feature type="splice variant" id="VSP_017528" description="In isoform 3." evidence="12">
    <location>
        <begin position="543"/>
        <end position="2176"/>
    </location>
</feature>
<feature type="mutagenesis site" description="Abolishes localization to synapses and induces diffuse expression in photoreceptor cells." evidence="8">
    <location>
        <begin position="2174"/>
        <end position="2176"/>
    </location>
</feature>
<feature type="strand" evidence="19">
    <location>
        <begin position="31"/>
        <end position="33"/>
    </location>
</feature>
<feature type="strand" evidence="19">
    <location>
        <begin position="38"/>
        <end position="43"/>
    </location>
</feature>
<feature type="strand" evidence="19">
    <location>
        <begin position="48"/>
        <end position="51"/>
    </location>
</feature>
<feature type="strand" evidence="17">
    <location>
        <begin position="57"/>
        <end position="59"/>
    </location>
</feature>
<feature type="strand" evidence="19">
    <location>
        <begin position="61"/>
        <end position="66"/>
    </location>
</feature>
<feature type="strand" evidence="19">
    <location>
        <begin position="69"/>
        <end position="72"/>
    </location>
</feature>
<feature type="strand" evidence="19">
    <location>
        <begin position="74"/>
        <end position="76"/>
    </location>
</feature>
<feature type="strand" evidence="19">
    <location>
        <begin position="79"/>
        <end position="84"/>
    </location>
</feature>
<feature type="helix" evidence="19">
    <location>
        <begin position="87"/>
        <end position="89"/>
    </location>
</feature>
<feature type="strand" evidence="19">
    <location>
        <begin position="91"/>
        <end position="99"/>
    </location>
</feature>
<feature type="strand" evidence="19">
    <location>
        <begin position="102"/>
        <end position="105"/>
    </location>
</feature>
<feature type="strand" evidence="19">
    <location>
        <begin position="109"/>
        <end position="116"/>
    </location>
</feature>
<feature type="strand" evidence="19">
    <location>
        <begin position="124"/>
        <end position="129"/>
    </location>
</feature>
<feature type="strand" evidence="19">
    <location>
        <begin position="134"/>
        <end position="136"/>
    </location>
</feature>
<feature type="strand" evidence="19">
    <location>
        <begin position="143"/>
        <end position="145"/>
    </location>
</feature>
<feature type="strand" evidence="19">
    <location>
        <begin position="148"/>
        <end position="153"/>
    </location>
</feature>
<feature type="strand" evidence="19">
    <location>
        <begin position="162"/>
        <end position="166"/>
    </location>
</feature>
<feature type="strand" evidence="19">
    <location>
        <begin position="172"/>
        <end position="174"/>
    </location>
</feature>
<feature type="helix" evidence="19">
    <location>
        <begin position="179"/>
        <end position="181"/>
    </location>
</feature>
<feature type="strand" evidence="19">
    <location>
        <begin position="183"/>
        <end position="190"/>
    </location>
</feature>
<feature type="turn" evidence="19">
    <location>
        <begin position="192"/>
        <end position="194"/>
    </location>
</feature>
<feature type="strand" evidence="19">
    <location>
        <begin position="197"/>
        <end position="199"/>
    </location>
</feature>
<feature type="strand" evidence="19">
    <location>
        <begin position="203"/>
        <end position="208"/>
    </location>
</feature>
<feature type="strand" evidence="19">
    <location>
        <begin position="217"/>
        <end position="223"/>
    </location>
</feature>
<feature type="strand" evidence="19">
    <location>
        <begin position="228"/>
        <end position="240"/>
    </location>
</feature>
<feature type="strand" evidence="19">
    <location>
        <begin position="242"/>
        <end position="247"/>
    </location>
</feature>
<feature type="helix" evidence="19">
    <location>
        <begin position="248"/>
        <end position="250"/>
    </location>
</feature>
<feature type="strand" evidence="19">
    <location>
        <begin position="251"/>
        <end position="257"/>
    </location>
</feature>
<feature type="strand" evidence="18">
    <location>
        <begin position="260"/>
        <end position="262"/>
    </location>
</feature>
<feature type="strand" evidence="19">
    <location>
        <begin position="264"/>
        <end position="267"/>
    </location>
</feature>
<feature type="turn" evidence="19">
    <location>
        <begin position="268"/>
        <end position="271"/>
    </location>
</feature>
<feature type="strand" evidence="19">
    <location>
        <begin position="272"/>
        <end position="277"/>
    </location>
</feature>
<feature type="helix" evidence="17">
    <location>
        <begin position="280"/>
        <end position="282"/>
    </location>
</feature>
<feature type="strand" evidence="19">
    <location>
        <begin position="284"/>
        <end position="292"/>
    </location>
</feature>
<feature type="strand" evidence="19">
    <location>
        <begin position="300"/>
        <end position="316"/>
    </location>
</feature>
<feature type="strand" evidence="19">
    <location>
        <begin position="320"/>
        <end position="325"/>
    </location>
</feature>
<feature type="strand" evidence="19">
    <location>
        <begin position="330"/>
        <end position="332"/>
    </location>
</feature>
<feature type="strand" evidence="19">
    <location>
        <begin position="335"/>
        <end position="340"/>
    </location>
</feature>
<feature type="strand" evidence="19">
    <location>
        <begin position="343"/>
        <end position="352"/>
    </location>
</feature>
<feature type="turn" evidence="18">
    <location>
        <begin position="355"/>
        <end position="357"/>
    </location>
</feature>
<feature type="strand" evidence="19">
    <location>
        <begin position="359"/>
        <end position="363"/>
    </location>
</feature>
<feature type="strand" evidence="19">
    <location>
        <begin position="369"/>
        <end position="371"/>
    </location>
</feature>
<feature type="helix" evidence="19">
    <location>
        <begin position="376"/>
        <end position="378"/>
    </location>
</feature>
<feature type="strand" evidence="19">
    <location>
        <begin position="380"/>
        <end position="388"/>
    </location>
</feature>
<feature type="strand" evidence="19">
    <location>
        <begin position="391"/>
        <end position="402"/>
    </location>
</feature>
<keyword id="KW-0002">3D-structure</keyword>
<keyword id="KW-0025">Alternative splicing</keyword>
<keyword id="KW-0130">Cell adhesion</keyword>
<keyword id="KW-1003">Cell membrane</keyword>
<keyword id="KW-1015">Disulfide bond</keyword>
<keyword id="KW-0325">Glycoprotein</keyword>
<keyword id="KW-0393">Immunoglobulin domain</keyword>
<keyword id="KW-0472">Membrane</keyword>
<keyword id="KW-1185">Reference proteome</keyword>
<keyword id="KW-0677">Repeat</keyword>
<keyword id="KW-0732">Signal</keyword>
<keyword id="KW-0770">Synapse</keyword>
<keyword id="KW-0812">Transmembrane</keyword>
<keyword id="KW-1133">Transmembrane helix</keyword>
<evidence type="ECO:0000250" key="1">
    <source>
        <dbReference type="UniProtKB" id="Q8AV57"/>
    </source>
</evidence>
<evidence type="ECO:0000255" key="2"/>
<evidence type="ECO:0000255" key="3">
    <source>
        <dbReference type="PROSITE-ProRule" id="PRU00114"/>
    </source>
</evidence>
<evidence type="ECO:0000255" key="4">
    <source>
        <dbReference type="PROSITE-ProRule" id="PRU00316"/>
    </source>
</evidence>
<evidence type="ECO:0000256" key="5">
    <source>
        <dbReference type="SAM" id="MobiDB-lite"/>
    </source>
</evidence>
<evidence type="ECO:0000269" key="6">
    <source>
    </source>
</evidence>
<evidence type="ECO:0000269" key="7">
    <source>
    </source>
</evidence>
<evidence type="ECO:0000269" key="8">
    <source>
    </source>
</evidence>
<evidence type="ECO:0000269" key="9">
    <source>
    </source>
</evidence>
<evidence type="ECO:0000303" key="10">
    <source>
    </source>
</evidence>
<evidence type="ECO:0000303" key="11">
    <source>
    </source>
</evidence>
<evidence type="ECO:0000303" key="12">
    <source>
    </source>
</evidence>
<evidence type="ECO:0000303" key="13">
    <source>
    </source>
</evidence>
<evidence type="ECO:0000305" key="14"/>
<evidence type="ECO:0000305" key="15">
    <source>
    </source>
</evidence>
<evidence type="ECO:0000312" key="16">
    <source>
        <dbReference type="MGI" id="MGI:2443847"/>
    </source>
</evidence>
<evidence type="ECO:0007829" key="17">
    <source>
        <dbReference type="PDB" id="5K6X"/>
    </source>
</evidence>
<evidence type="ECO:0007829" key="18">
    <source>
        <dbReference type="PDB" id="5K6Y"/>
    </source>
</evidence>
<evidence type="ECO:0007829" key="19">
    <source>
        <dbReference type="PDB" id="5XX0"/>
    </source>
</evidence>
<dbReference type="EMBL" id="AY351699">
    <property type="protein sequence ID" value="AAQ57661.1"/>
    <property type="molecule type" value="mRNA"/>
</dbReference>
<dbReference type="EMBL" id="AK161326">
    <property type="protein sequence ID" value="BAE36324.1"/>
    <property type="molecule type" value="mRNA"/>
</dbReference>
<dbReference type="EMBL" id="BC038036">
    <property type="protein sequence ID" value="AAH38036.1"/>
    <property type="molecule type" value="mRNA"/>
</dbReference>
<dbReference type="EMBL" id="AK129379">
    <property type="protein sequence ID" value="BAC98189.1"/>
    <property type="molecule type" value="mRNA"/>
</dbReference>
<dbReference type="CCDS" id="CCDS25605.1">
    <molecule id="Q6V4S5-1"/>
</dbReference>
<dbReference type="RefSeq" id="NP_766388.2">
    <molecule id="Q6V4S5-1"/>
    <property type="nucleotide sequence ID" value="NM_172800.2"/>
</dbReference>
<dbReference type="PDB" id="5K6X">
    <property type="method" value="X-ray"/>
    <property type="resolution" value="2.70 A"/>
    <property type="chains" value="A/B=22-403"/>
</dbReference>
<dbReference type="PDB" id="5K6Y">
    <property type="method" value="X-ray"/>
    <property type="resolution" value="3.20 A"/>
    <property type="chains" value="A/B=22-403"/>
</dbReference>
<dbReference type="PDB" id="5K6Z">
    <property type="method" value="X-ray"/>
    <property type="resolution" value="2.70 A"/>
    <property type="chains" value="A/B=22-211"/>
</dbReference>
<dbReference type="PDB" id="5K70">
    <property type="method" value="X-ray"/>
    <property type="resolution" value="2.70 A"/>
    <property type="chains" value="A/B/C/D=22-403"/>
</dbReference>
<dbReference type="PDB" id="5XX0">
    <property type="method" value="X-ray"/>
    <property type="resolution" value="2.40 A"/>
    <property type="chains" value="A/B=1-403"/>
</dbReference>
<dbReference type="PDBsum" id="5K6X"/>
<dbReference type="PDBsum" id="5K6Y"/>
<dbReference type="PDBsum" id="5K6Z"/>
<dbReference type="PDBsum" id="5K70"/>
<dbReference type="PDBsum" id="5XX0"/>
<dbReference type="SMR" id="Q6V4S5"/>
<dbReference type="BioGRID" id="231935">
    <property type="interactions" value="4"/>
</dbReference>
<dbReference type="FunCoup" id="Q6V4S5">
    <property type="interactions" value="284"/>
</dbReference>
<dbReference type="STRING" id="10090.ENSMUSP00000038972"/>
<dbReference type="GlyConnect" id="2645">
    <property type="glycosylation" value="4 N-Linked glycans (10 sites)"/>
</dbReference>
<dbReference type="GlyCosmos" id="Q6V4S5">
    <property type="glycosylation" value="14 sites, 4 glycans"/>
</dbReference>
<dbReference type="GlyGen" id="Q6V4S5">
    <property type="glycosylation" value="20 sites, 17 N-linked glycans (16 sites), 1 O-linked glycan (1 site)"/>
</dbReference>
<dbReference type="iPTMnet" id="Q6V4S5"/>
<dbReference type="PhosphoSitePlus" id="Q6V4S5"/>
<dbReference type="jPOST" id="Q6V4S5"/>
<dbReference type="PaxDb" id="10090-ENSMUSP00000038972"/>
<dbReference type="PeptideAtlas" id="Q6V4S5"/>
<dbReference type="ProteomicsDB" id="257113">
    <molecule id="Q6V4S5-1"/>
</dbReference>
<dbReference type="ProteomicsDB" id="257114">
    <molecule id="Q6V4S5-2"/>
</dbReference>
<dbReference type="ProteomicsDB" id="257115">
    <molecule id="Q6V4S5-3"/>
</dbReference>
<dbReference type="Antibodypedia" id="2228">
    <property type="antibodies" value="16 antibodies from 4 providers"/>
</dbReference>
<dbReference type="DNASU" id="237979"/>
<dbReference type="Ensembl" id="ENSMUST00000041627.14">
    <molecule id="Q6V4S5-1"/>
    <property type="protein sequence ID" value="ENSMUSP00000038972.8"/>
    <property type="gene ID" value="ENSMUSG00000041592.17"/>
</dbReference>
<dbReference type="GeneID" id="237979"/>
<dbReference type="KEGG" id="mmu:237979"/>
<dbReference type="UCSC" id="uc007mfd.1">
    <molecule id="Q6V4S5-2"/>
    <property type="organism name" value="mouse"/>
</dbReference>
<dbReference type="UCSC" id="uc007mfe.1">
    <molecule id="Q6V4S5-1"/>
    <property type="organism name" value="mouse"/>
</dbReference>
<dbReference type="UCSC" id="uc007mfg.1">
    <molecule id="Q6V4S5-3"/>
    <property type="organism name" value="mouse"/>
</dbReference>
<dbReference type="AGR" id="MGI:2443847"/>
<dbReference type="CTD" id="54549"/>
<dbReference type="MGI" id="MGI:2443847">
    <property type="gene designation" value="Sdk2"/>
</dbReference>
<dbReference type="VEuPathDB" id="HostDB:ENSMUSG00000041592"/>
<dbReference type="eggNOG" id="KOG3510">
    <property type="taxonomic scope" value="Eukaryota"/>
</dbReference>
<dbReference type="GeneTree" id="ENSGT00940000155761"/>
<dbReference type="HOGENOM" id="CLU_001875_1_0_1"/>
<dbReference type="InParanoid" id="Q6V4S5"/>
<dbReference type="OMA" id="NCTTVLY"/>
<dbReference type="OrthoDB" id="8923679at2759"/>
<dbReference type="PhylomeDB" id="Q6V4S5"/>
<dbReference type="TreeFam" id="TF316846"/>
<dbReference type="Reactome" id="R-MMU-373756">
    <property type="pathway name" value="SDK interactions"/>
</dbReference>
<dbReference type="BioGRID-ORCS" id="237979">
    <property type="hits" value="5 hits in 77 CRISPR screens"/>
</dbReference>
<dbReference type="ChiTaRS" id="Sdk2">
    <property type="organism name" value="mouse"/>
</dbReference>
<dbReference type="PRO" id="PR:Q6V4S5"/>
<dbReference type="Proteomes" id="UP000000589">
    <property type="component" value="Chromosome 11"/>
</dbReference>
<dbReference type="RNAct" id="Q6V4S5">
    <property type="molecule type" value="protein"/>
</dbReference>
<dbReference type="Bgee" id="ENSMUSG00000041592">
    <property type="expression patterns" value="Expressed in vault of skull and 188 other cell types or tissues"/>
</dbReference>
<dbReference type="ExpressionAtlas" id="Q6V4S5">
    <property type="expression patterns" value="baseline and differential"/>
</dbReference>
<dbReference type="GO" id="GO:0005886">
    <property type="term" value="C:plasma membrane"/>
    <property type="evidence" value="ECO:0007669"/>
    <property type="project" value="UniProtKB-SubCell"/>
</dbReference>
<dbReference type="GO" id="GO:0045202">
    <property type="term" value="C:synapse"/>
    <property type="evidence" value="ECO:0000314"/>
    <property type="project" value="UniProtKB"/>
</dbReference>
<dbReference type="GO" id="GO:0060219">
    <property type="term" value="P:camera-type eye photoreceptor cell differentiation"/>
    <property type="evidence" value="ECO:0000314"/>
    <property type="project" value="UniProtKB"/>
</dbReference>
<dbReference type="GO" id="GO:0007156">
    <property type="term" value="P:homophilic cell adhesion via plasma membrane adhesion molecules"/>
    <property type="evidence" value="ECO:0000314"/>
    <property type="project" value="UniProtKB"/>
</dbReference>
<dbReference type="GO" id="GO:0010842">
    <property type="term" value="P:retina layer formation"/>
    <property type="evidence" value="ECO:0000315"/>
    <property type="project" value="UniProtKB"/>
</dbReference>
<dbReference type="GO" id="GO:0007416">
    <property type="term" value="P:synapse assembly"/>
    <property type="evidence" value="ECO:0000315"/>
    <property type="project" value="UniProtKB"/>
</dbReference>
<dbReference type="CDD" id="cd00063">
    <property type="entry name" value="FN3"/>
    <property type="match status" value="13"/>
</dbReference>
<dbReference type="CDD" id="cd00096">
    <property type="entry name" value="Ig"/>
    <property type="match status" value="1"/>
</dbReference>
<dbReference type="FunFam" id="2.60.40.10:FF:000202">
    <property type="entry name" value="Sidekick cell adhesion molecule 1"/>
    <property type="match status" value="1"/>
</dbReference>
<dbReference type="FunFam" id="2.60.40.10:FF:000253">
    <property type="entry name" value="Sidekick cell adhesion molecule 1"/>
    <property type="match status" value="1"/>
</dbReference>
<dbReference type="FunFam" id="2.60.40.10:FF:000158">
    <property type="entry name" value="Sidekick cell adhesion molecule 2"/>
    <property type="match status" value="1"/>
</dbReference>
<dbReference type="FunFam" id="2.60.40.10:FF:000177">
    <property type="entry name" value="Sidekick cell adhesion molecule 2"/>
    <property type="match status" value="1"/>
</dbReference>
<dbReference type="FunFam" id="2.60.40.10:FF:000206">
    <property type="entry name" value="Sidekick cell adhesion molecule 2"/>
    <property type="match status" value="1"/>
</dbReference>
<dbReference type="FunFam" id="2.60.40.10:FF:000209">
    <property type="entry name" value="Sidekick cell adhesion molecule 2"/>
    <property type="match status" value="1"/>
</dbReference>
<dbReference type="FunFam" id="2.60.40.10:FF:000231">
    <property type="entry name" value="Sidekick cell adhesion molecule 2"/>
    <property type="match status" value="1"/>
</dbReference>
<dbReference type="FunFam" id="2.60.40.10:FF:000236">
    <property type="entry name" value="Sidekick cell adhesion molecule 2"/>
    <property type="match status" value="1"/>
</dbReference>
<dbReference type="FunFam" id="2.60.40.10:FF:000237">
    <property type="entry name" value="Sidekick cell adhesion molecule 2"/>
    <property type="match status" value="1"/>
</dbReference>
<dbReference type="FunFam" id="2.60.40.10:FF:000261">
    <property type="entry name" value="Sidekick cell adhesion molecule 2"/>
    <property type="match status" value="1"/>
</dbReference>
<dbReference type="FunFam" id="2.60.40.10:FF:000266">
    <property type="entry name" value="Sidekick cell adhesion molecule 2"/>
    <property type="match status" value="1"/>
</dbReference>
<dbReference type="FunFam" id="2.60.40.10:FF:000267">
    <property type="entry name" value="Sidekick cell adhesion molecule 2"/>
    <property type="match status" value="1"/>
</dbReference>
<dbReference type="FunFam" id="2.60.40.10:FF:000271">
    <property type="entry name" value="Sidekick cell adhesion molecule 2"/>
    <property type="match status" value="1"/>
</dbReference>
<dbReference type="FunFam" id="2.60.40.10:FF:000301">
    <property type="entry name" value="Sidekick cell adhesion molecule 2"/>
    <property type="match status" value="1"/>
</dbReference>
<dbReference type="FunFam" id="2.60.40.10:FF:000359">
    <property type="entry name" value="Sidekick cell adhesion molecule 2"/>
    <property type="match status" value="1"/>
</dbReference>
<dbReference type="FunFam" id="2.60.40.10:FF:000360">
    <property type="entry name" value="Sidekick cell adhesion molecule 2"/>
    <property type="match status" value="1"/>
</dbReference>
<dbReference type="FunFam" id="2.60.40.10:FF:000420">
    <property type="entry name" value="Sidekick cell adhesion molecule 2"/>
    <property type="match status" value="1"/>
</dbReference>
<dbReference type="FunFam" id="2.60.40.10:FF:000434">
    <property type="entry name" value="Sidekick cell adhesion molecule 2"/>
    <property type="match status" value="1"/>
</dbReference>
<dbReference type="FunFam" id="2.60.40.10:FF:000485">
    <property type="entry name" value="Sidekick cell adhesion molecule 2"/>
    <property type="match status" value="1"/>
</dbReference>
<dbReference type="Gene3D" id="2.60.40.10">
    <property type="entry name" value="Immunoglobulins"/>
    <property type="match status" value="19"/>
</dbReference>
<dbReference type="InterPro" id="IPR003961">
    <property type="entry name" value="FN3_dom"/>
</dbReference>
<dbReference type="InterPro" id="IPR036116">
    <property type="entry name" value="FN3_sf"/>
</dbReference>
<dbReference type="InterPro" id="IPR007110">
    <property type="entry name" value="Ig-like_dom"/>
</dbReference>
<dbReference type="InterPro" id="IPR036179">
    <property type="entry name" value="Ig-like_dom_sf"/>
</dbReference>
<dbReference type="InterPro" id="IPR013783">
    <property type="entry name" value="Ig-like_fold"/>
</dbReference>
<dbReference type="InterPro" id="IPR013098">
    <property type="entry name" value="Ig_I-set"/>
</dbReference>
<dbReference type="InterPro" id="IPR003599">
    <property type="entry name" value="Ig_sub"/>
</dbReference>
<dbReference type="InterPro" id="IPR003598">
    <property type="entry name" value="Ig_sub2"/>
</dbReference>
<dbReference type="PANTHER" id="PTHR44170:SF6">
    <property type="entry name" value="CONTACTIN"/>
    <property type="match status" value="1"/>
</dbReference>
<dbReference type="PANTHER" id="PTHR44170">
    <property type="entry name" value="PROTEIN SIDEKICK"/>
    <property type="match status" value="1"/>
</dbReference>
<dbReference type="Pfam" id="PF00041">
    <property type="entry name" value="fn3"/>
    <property type="match status" value="13"/>
</dbReference>
<dbReference type="Pfam" id="PF07679">
    <property type="entry name" value="I-set"/>
    <property type="match status" value="4"/>
</dbReference>
<dbReference type="Pfam" id="PF13927">
    <property type="entry name" value="Ig_3"/>
    <property type="match status" value="2"/>
</dbReference>
<dbReference type="PRINTS" id="PR00014">
    <property type="entry name" value="FNTYPEIII"/>
</dbReference>
<dbReference type="SMART" id="SM00060">
    <property type="entry name" value="FN3"/>
    <property type="match status" value="13"/>
</dbReference>
<dbReference type="SMART" id="SM00409">
    <property type="entry name" value="IG"/>
    <property type="match status" value="6"/>
</dbReference>
<dbReference type="SMART" id="SM00408">
    <property type="entry name" value="IGc2"/>
    <property type="match status" value="6"/>
</dbReference>
<dbReference type="SUPFAM" id="SSF49265">
    <property type="entry name" value="Fibronectin type III"/>
    <property type="match status" value="7"/>
</dbReference>
<dbReference type="SUPFAM" id="SSF48726">
    <property type="entry name" value="Immunoglobulin"/>
    <property type="match status" value="5"/>
</dbReference>
<dbReference type="PROSITE" id="PS50853">
    <property type="entry name" value="FN3"/>
    <property type="match status" value="13"/>
</dbReference>
<dbReference type="PROSITE" id="PS50835">
    <property type="entry name" value="IG_LIKE"/>
    <property type="match status" value="6"/>
</dbReference>
<name>SDK2_MOUSE</name>
<comment type="function">
    <text evidence="9">Adhesion molecule that promotes lamina-specific synaptic connections in the retina and is specifically required for the formation of neuronal circuits that detect motion (PubMed:26287463). Acts by promoting formation of synapses between two specific retinal cell types: the retinal ganglion cells W3B-RGCs and the excitatory amacrine cells VG3-ACs. Formation of synapses between these two cells plays a key role in detection of motion (PubMed:26287463). Promotes synaptic connectivity via homophilic interactions (PubMed:26287463).</text>
</comment>
<comment type="subunit">
    <text evidence="7 8 9">Homodimer; mediates homophilic interactions to promote cell adhesion (PubMed:15703275, PubMed:26287463). Interacts (via PDZ-binding motif) with MAGI1, MAGI2, DLG2, DLG3 and DLG4 (PubMed:20219992).</text>
</comment>
<comment type="subcellular location">
    <subcellularLocation>
        <location evidence="1">Cell membrane</location>
        <topology evidence="1">Single-pass type I membrane protein</topology>
    </subcellularLocation>
    <subcellularLocation>
        <location evidence="8 15">Synapse</location>
    </subcellularLocation>
</comment>
<comment type="alternative products">
    <event type="alternative splicing"/>
    <isoform>
        <id>Q6V4S5-1</id>
        <name>1</name>
        <sequence type="displayed"/>
    </isoform>
    <isoform>
        <id>Q6V4S5-2</id>
        <name>2</name>
        <sequence type="described" ref="VSP_017526"/>
    </isoform>
    <isoform>
        <id>Q6V4S5-3</id>
        <name>3</name>
        <sequence type="described" ref="VSP_017527 VSP_017528"/>
    </isoform>
</comment>
<comment type="tissue specificity">
    <text evidence="6 9">Expressed in retinal ganglion cells (RGCs) that form synapses in distinct inner plexiform layer (IPL) sublaminae. Specifically expressed in specific subsets of retinal ganglion cells (RGCs), named W3B-RGCs, that specifically respond when the timing of the movement of a small object differs from that of the background, but not when they coincide (at protein level). Also present in excitatory amacrine cell type called VG3-ACs, that provide strong and selective input W3B-RGCs (at protein level) (PubMed:26287463). Expressed at low levels in the glomeruli (PubMed:15213259).</text>
</comment>
<comment type="developmental stage">
    <text evidence="6">Highly expressed in many fetal tissues, inlcuding kidney but shows markedly lower expression in adult organs. Expression in kidney is high throughout development with maximal expression occurring near birth.</text>
</comment>
<comment type="domain">
    <text evidence="8">The PDZ-binding motif mediates interaction with PDZ domain-containing proteins MAGI1, MAGI2, DLG2, DLG3 and DLG4 and is required for is required for synaptic localization in photoreceptors.</text>
</comment>
<comment type="disruption phenotype">
    <text evidence="9">Mice are viable and fertile but show decreased synaptic connectivity between the retinal ganglion cells W3B-RGCs and the excitatory amacrine cells VG3-ACs.</text>
</comment>
<comment type="miscellaneous">
    <molecule>Isoform 3</molecule>
    <text evidence="14">Due to intron retention.</text>
</comment>
<comment type="similarity">
    <text evidence="14">Belongs to the sidekick family.</text>
</comment>
<comment type="online information" name="Protein Spotlight">
    <link uri="https://www.proteinspotlight.org/back_issues/176/"/>
    <text>Discerning change - Issue 176 of February 2016</text>
</comment>
<proteinExistence type="evidence at protein level"/>
<organism>
    <name type="scientific">Mus musculus</name>
    <name type="common">Mouse</name>
    <dbReference type="NCBI Taxonomy" id="10090"/>
    <lineage>
        <taxon>Eukaryota</taxon>
        <taxon>Metazoa</taxon>
        <taxon>Chordata</taxon>
        <taxon>Craniata</taxon>
        <taxon>Vertebrata</taxon>
        <taxon>Euteleostomi</taxon>
        <taxon>Mammalia</taxon>
        <taxon>Eutheria</taxon>
        <taxon>Euarchontoglires</taxon>
        <taxon>Glires</taxon>
        <taxon>Rodentia</taxon>
        <taxon>Myomorpha</taxon>
        <taxon>Muroidea</taxon>
        <taxon>Muridae</taxon>
        <taxon>Murinae</taxon>
        <taxon>Mus</taxon>
        <taxon>Mus</taxon>
    </lineage>
</organism>
<reference key="1">
    <citation type="journal article" date="2004" name="J. Am. Soc. Nephrol.">
        <title>Sidekick-1 is upregulated in glomeruli in HIV-associated nephropathy.</title>
        <authorList>
            <person name="Kaufman L."/>
            <person name="Hayashi K."/>
            <person name="Ross M.J."/>
            <person name="Ross M.D."/>
            <person name="Klotman P.E."/>
        </authorList>
    </citation>
    <scope>NUCLEOTIDE SEQUENCE [MRNA] (ISOFORM 1)</scope>
    <scope>TISSUE SPECIFICITY</scope>
    <scope>DEVELOPMENTAL STAGE</scope>
    <source>
        <strain>FVB/N</strain>
    </source>
</reference>
<reference key="2">
    <citation type="journal article" date="2005" name="Science">
        <title>The transcriptional landscape of the mammalian genome.</title>
        <authorList>
            <person name="Carninci P."/>
            <person name="Kasukawa T."/>
            <person name="Katayama S."/>
            <person name="Gough J."/>
            <person name="Frith M.C."/>
            <person name="Maeda N."/>
            <person name="Oyama R."/>
            <person name="Ravasi T."/>
            <person name="Lenhard B."/>
            <person name="Wells C."/>
            <person name="Kodzius R."/>
            <person name="Shimokawa K."/>
            <person name="Bajic V.B."/>
            <person name="Brenner S.E."/>
            <person name="Batalov S."/>
            <person name="Forrest A.R."/>
            <person name="Zavolan M."/>
            <person name="Davis M.J."/>
            <person name="Wilming L.G."/>
            <person name="Aidinis V."/>
            <person name="Allen J.E."/>
            <person name="Ambesi-Impiombato A."/>
            <person name="Apweiler R."/>
            <person name="Aturaliya R.N."/>
            <person name="Bailey T.L."/>
            <person name="Bansal M."/>
            <person name="Baxter L."/>
            <person name="Beisel K.W."/>
            <person name="Bersano T."/>
            <person name="Bono H."/>
            <person name="Chalk A.M."/>
            <person name="Chiu K.P."/>
            <person name="Choudhary V."/>
            <person name="Christoffels A."/>
            <person name="Clutterbuck D.R."/>
            <person name="Crowe M.L."/>
            <person name="Dalla E."/>
            <person name="Dalrymple B.P."/>
            <person name="de Bono B."/>
            <person name="Della Gatta G."/>
            <person name="di Bernardo D."/>
            <person name="Down T."/>
            <person name="Engstrom P."/>
            <person name="Fagiolini M."/>
            <person name="Faulkner G."/>
            <person name="Fletcher C.F."/>
            <person name="Fukushima T."/>
            <person name="Furuno M."/>
            <person name="Futaki S."/>
            <person name="Gariboldi M."/>
            <person name="Georgii-Hemming P."/>
            <person name="Gingeras T.R."/>
            <person name="Gojobori T."/>
            <person name="Green R.E."/>
            <person name="Gustincich S."/>
            <person name="Harbers M."/>
            <person name="Hayashi Y."/>
            <person name="Hensch T.K."/>
            <person name="Hirokawa N."/>
            <person name="Hill D."/>
            <person name="Huminiecki L."/>
            <person name="Iacono M."/>
            <person name="Ikeo K."/>
            <person name="Iwama A."/>
            <person name="Ishikawa T."/>
            <person name="Jakt M."/>
            <person name="Kanapin A."/>
            <person name="Katoh M."/>
            <person name="Kawasawa Y."/>
            <person name="Kelso J."/>
            <person name="Kitamura H."/>
            <person name="Kitano H."/>
            <person name="Kollias G."/>
            <person name="Krishnan S.P."/>
            <person name="Kruger A."/>
            <person name="Kummerfeld S.K."/>
            <person name="Kurochkin I.V."/>
            <person name="Lareau L.F."/>
            <person name="Lazarevic D."/>
            <person name="Lipovich L."/>
            <person name="Liu J."/>
            <person name="Liuni S."/>
            <person name="McWilliam S."/>
            <person name="Madan Babu M."/>
            <person name="Madera M."/>
            <person name="Marchionni L."/>
            <person name="Matsuda H."/>
            <person name="Matsuzawa S."/>
            <person name="Miki H."/>
            <person name="Mignone F."/>
            <person name="Miyake S."/>
            <person name="Morris K."/>
            <person name="Mottagui-Tabar S."/>
            <person name="Mulder N."/>
            <person name="Nakano N."/>
            <person name="Nakauchi H."/>
            <person name="Ng P."/>
            <person name="Nilsson R."/>
            <person name="Nishiguchi S."/>
            <person name="Nishikawa S."/>
            <person name="Nori F."/>
            <person name="Ohara O."/>
            <person name="Okazaki Y."/>
            <person name="Orlando V."/>
            <person name="Pang K.C."/>
            <person name="Pavan W.J."/>
            <person name="Pavesi G."/>
            <person name="Pesole G."/>
            <person name="Petrovsky N."/>
            <person name="Piazza S."/>
            <person name="Reed J."/>
            <person name="Reid J.F."/>
            <person name="Ring B.Z."/>
            <person name="Ringwald M."/>
            <person name="Rost B."/>
            <person name="Ruan Y."/>
            <person name="Salzberg S.L."/>
            <person name="Sandelin A."/>
            <person name="Schneider C."/>
            <person name="Schoenbach C."/>
            <person name="Sekiguchi K."/>
            <person name="Semple C.A."/>
            <person name="Seno S."/>
            <person name="Sessa L."/>
            <person name="Sheng Y."/>
            <person name="Shibata Y."/>
            <person name="Shimada H."/>
            <person name="Shimada K."/>
            <person name="Silva D."/>
            <person name="Sinclair B."/>
            <person name="Sperling S."/>
            <person name="Stupka E."/>
            <person name="Sugiura K."/>
            <person name="Sultana R."/>
            <person name="Takenaka Y."/>
            <person name="Taki K."/>
            <person name="Tammoja K."/>
            <person name="Tan S.L."/>
            <person name="Tang S."/>
            <person name="Taylor M.S."/>
            <person name="Tegner J."/>
            <person name="Teichmann S.A."/>
            <person name="Ueda H.R."/>
            <person name="van Nimwegen E."/>
            <person name="Verardo R."/>
            <person name="Wei C.L."/>
            <person name="Yagi K."/>
            <person name="Yamanishi H."/>
            <person name="Zabarovsky E."/>
            <person name="Zhu S."/>
            <person name="Zimmer A."/>
            <person name="Hide W."/>
            <person name="Bult C."/>
            <person name="Grimmond S.M."/>
            <person name="Teasdale R.D."/>
            <person name="Liu E.T."/>
            <person name="Brusic V."/>
            <person name="Quackenbush J."/>
            <person name="Wahlestedt C."/>
            <person name="Mattick J.S."/>
            <person name="Hume D.A."/>
            <person name="Kai C."/>
            <person name="Sasaki D."/>
            <person name="Tomaru Y."/>
            <person name="Fukuda S."/>
            <person name="Kanamori-Katayama M."/>
            <person name="Suzuki M."/>
            <person name="Aoki J."/>
            <person name="Arakawa T."/>
            <person name="Iida J."/>
            <person name="Imamura K."/>
            <person name="Itoh M."/>
            <person name="Kato T."/>
            <person name="Kawaji H."/>
            <person name="Kawagashira N."/>
            <person name="Kawashima T."/>
            <person name="Kojima M."/>
            <person name="Kondo S."/>
            <person name="Konno H."/>
            <person name="Nakano K."/>
            <person name="Ninomiya N."/>
            <person name="Nishio T."/>
            <person name="Okada M."/>
            <person name="Plessy C."/>
            <person name="Shibata K."/>
            <person name="Shiraki T."/>
            <person name="Suzuki S."/>
            <person name="Tagami M."/>
            <person name="Waki K."/>
            <person name="Watahiki A."/>
            <person name="Okamura-Oho Y."/>
            <person name="Suzuki H."/>
            <person name="Kawai J."/>
            <person name="Hayashizaki Y."/>
        </authorList>
    </citation>
    <scope>NUCLEOTIDE SEQUENCE [LARGE SCALE MRNA] (ISOFORM 2)</scope>
    <source>
        <strain>C57BL/6J</strain>
        <tissue>Testis</tissue>
    </source>
</reference>
<reference key="3">
    <citation type="journal article" date="2004" name="Genome Res.">
        <title>The status, quality, and expansion of the NIH full-length cDNA project: the Mammalian Gene Collection (MGC).</title>
        <authorList>
            <consortium name="The MGC Project Team"/>
        </authorList>
    </citation>
    <scope>NUCLEOTIDE SEQUENCE [LARGE SCALE MRNA] (ISOFORM 3)</scope>
    <source>
        <strain>FVB/N</strain>
        <tissue>Salivary gland</tissue>
    </source>
</reference>
<reference key="4">
    <citation type="journal article" date="2003" name="DNA Res.">
        <title>Prediction of the coding sequences of mouse homologues of KIAA gene: III. The complete nucleotide sequences of 500 mouse KIAA-homologous cDNAs identified by screening of terminal sequences of cDNA clones randomly sampled from size-fractionated libraries.</title>
        <authorList>
            <person name="Okazaki N."/>
            <person name="Kikuno R."/>
            <person name="Ohara R."/>
            <person name="Inamoto S."/>
            <person name="Koseki H."/>
            <person name="Hiraoka S."/>
            <person name="Saga Y."/>
            <person name="Nagase T."/>
            <person name="Ohara O."/>
            <person name="Koga H."/>
        </authorList>
    </citation>
    <scope>NUCLEOTIDE SEQUENCE [LARGE SCALE MRNA] OF 183-2176 (ISOFORM 1)</scope>
    <source>
        <tissue>Brain</tissue>
    </source>
</reference>
<reference key="5">
    <citation type="journal article" date="2005" name="FASEB J.">
        <title>Definition of the critical domains required for homophilic targeting of mouse sidekick molecules.</title>
        <authorList>
            <person name="Hayashi K."/>
            <person name="Kaufman L."/>
            <person name="Ross M.D."/>
            <person name="Klotman P.E."/>
        </authorList>
    </citation>
    <scope>SUBUNIT</scope>
</reference>
<reference key="6">
    <citation type="journal article" date="2010" name="Cell">
        <title>A tissue-specific atlas of mouse protein phosphorylation and expression.</title>
        <authorList>
            <person name="Huttlin E.L."/>
            <person name="Jedrychowski M.P."/>
            <person name="Elias J.E."/>
            <person name="Goswami T."/>
            <person name="Rad R."/>
            <person name="Beausoleil S.A."/>
            <person name="Villen J."/>
            <person name="Haas W."/>
            <person name="Sowa M.E."/>
            <person name="Gygi S.P."/>
        </authorList>
    </citation>
    <scope>IDENTIFICATION BY MASS SPECTROMETRY [LARGE SCALE ANALYSIS]</scope>
    <source>
        <tissue>Brain</tissue>
        <tissue>Spleen</tissue>
        <tissue>Testis</tissue>
    </source>
</reference>
<reference key="7">
    <citation type="journal article" date="2010" name="J. Neurosci.">
        <title>Synaptic localization and function of Sidekick recognition molecules require MAGI scaffolding proteins.</title>
        <authorList>
            <person name="Yamagata M."/>
            <person name="Sanes J.R."/>
        </authorList>
    </citation>
    <scope>SUBCELLULAR LOCATION</scope>
    <scope>PDZ-BINDING MOTIF</scope>
    <scope>DOMAIN</scope>
    <scope>INTERACTION WITH MAGI1; MAGI2; DLG2; DLG3 AND DLG4</scope>
    <scope>MUTAGENESIS OF 2174-SER--VAL-2176</scope>
</reference>
<reference key="8">
    <citation type="journal article" date="2015" name="Nature">
        <title>Sidekick 2 directs formation of a retinal circuit that detects differential motion.</title>
        <authorList>
            <person name="Krishnaswamy A."/>
            <person name="Yamagata M."/>
            <person name="Duan X."/>
            <person name="Hong Y.K."/>
            <person name="Sanes J.R."/>
        </authorList>
    </citation>
    <scope>FUNCTION</scope>
    <scope>SUBCELLULAR LOCATION</scope>
    <scope>SUBUNIT</scope>
    <scope>TISSUE SPECIFICITY</scope>
    <scope>DISRUPTION PHENOTYPE</scope>
</reference>
<gene>
    <name evidence="11 16" type="primary">Sdk2</name>
    <name evidence="10" type="synonym">Kiaa1514</name>
</gene>
<sequence>MFSSMWRLPLWTLLALHRIHSAGAQDDVPPYFKTEPVRTQVHLEGNRLVLTCMAEGSWPLEFKWLHNNRELTRFSLEYRYMITSLDRTHAGFYRCIVRNRMGALLQRQTEVQVAYMGSFEEGEKRQSVNHGEAAVIRAPRISSFPRPQVTWFRDGRKIPPSSRIAITLENTLVILSTVAPDAGRYYVQAVNDKNGDNKTSQPITLAVENVGGPADPIAPTIIIPPKNTSVVAGTSEVTMECVANARPLIKLHIVWKKDGAPLSSGISDYNRRLTIANPTVSDAGYYECEAMLRSSSVAPVTRGAYLSVLEPPQFVREPERHITAEMEKVVDIPCRAKGVPPPSITWYKDAALVEVGKLTRFKQRSDGGLQISGLLPDDTGMLQCFAHNAAGEAQTSTYLAVTSIAPNITRGPLDSTVIDGMSVVLACETSGAPRPAITWQKGERILASGSVQLPRFTLLESGSLLISPTHISDAGTYTCLATNSRGVDEASADLVVWARTRITKPPQDQSVIKGTQASMVCGVTHDPRVTVRYVWEKDGATLAVETNPRIRLDRNGSLHISQTWSGDIGTYTCRVLSAGGNDSRNAHLRVRQLPHAPEHPVATLSTVERRAINLTWAKPFDGNSPLMRYVLEMSENNAPWTILLASVDPEATSVMVKGLVPARSYQFRLCAVNDVGKGQFSKDTERVSLPEEPPTAPPQNVIASGRTNQSIMIQWQPPPESHQNGILKGYIIRYCLAGLPVGYQFKNITDADVNNLLLEDLIIWTNYEIEVAAYNSAGLGVYSSKVTEWTLQGVPTVPPGNVHAEATNSTTIRFTWNAPSPQFINGINQGYKLIAWEPAQEEEVTMVTARPNFQDSIHVGFVSGLKKFTEYFTSVLCFTTPGDGPRSSPQLVRTHEDVPGPVGHLSFNDILDTSLKVSWQEPGEKNGILTGYRISWEEYNRTNTRVTHYLPNVTLEYRVTGLTALTTYTIEVAAMTSKGQGQVSASTISSGVPPELPGAPTNLGISNIGPRSVTLQFRPGYDGKTSISRWVVEAQVGVIGEGEEWLLIYQLGNEPDARSMEVPDLNPFTYYSFRMRQVNIVGTSPPSQPSRKIQTLQAPPDIAPANVTLRTASETSLWLRWMPLPEMEYNGNPESVGYKIKYGRSDGHGKTLSHTVQDRVEREYTIEDLEEWTEYRVQVQAFNAIGSGPWSQAVVGRTRESVPSSGPTNVSALATTSSSMLVRWSEIPEADRNGLVLGYKVRYKEKDSDSQPRFWLVEGNSSRSAQLTGLGKYVLYEVQVLAFTRIGDGSPSHPPILERTLDDVPGPPMGILFPEVRTTSVRLIWQPPAAPNGIILAYQITHRLNATTANTATVEVLAPSARQYMATGLKPESVYLFRITAQTRKGWGEAAEALVVTTEKRDRPQPPSKPVVQQEDVKARSVLLSWEPGSDGLSPVRYYTIQTRELPSGRWALHSASVSHNASAFTVDRLKPFTSYKFRVKATNDIGDSEFSEESESLTTLQAAPDEAPTILSVTPHTTTSVLIRWQPPSEDKINGILLGFRIRYRELLYDGLRGFTLRGINNPGAKWAELTSLYSMRNLTRPSLTQYELDNLSKHRRYEIRMSIYNAVGEGPLSPPQEVFVGEAVPTAAPQNVAIHSATATQLDVTWEPPPLDNQNGDIQGYKIYFWEVQRRNLTERVKTLFLAENSVKLKNLTGYTAYMVSVAAFNAAGDGPRSTPTRGQTQQAAPSAPGSVKFSELTTTSVNVSWDAPQFPNGPLEGYRLVYEPCTPVDGVSKIVTVDVKGNSPLWLKVKDLAEGMTYRFRIKAKTFTYGPEIEANITTGPGEGAPGPPGVPIIVRYSSAIAIHWSSGDPGKGPITRYVIEARPSDEGLWDILIKDIPKEVTSYTFSMDILKPGVSYDFRVIAVNDYGFGTPSSPSQSVPAQKASPFYEEWWFLVVIALVGLIFILLLVFVLIIRGQSKKYSKKTDSGGNTKSGALGHGEMLSLDESSFPALELNNRRLSVKNSFCRKNGLYTRSPPRPSPGSLHYSDEDVTKYNDLIPAESSSLTEKPSEISDSQGSDSEYEVDTNTQKAHSFVNHYISDPTYYNSWRRQQKGISRAQAYSYTESDSGEPDHVTVPNSNSTQQGSLFRPKASRTPTPQNPPNPQSQQSTLYRPPSSLAPGSRAPIAGFSSFV</sequence>
<accession>Q6V4S5</accession>
<accession>Q3TTK1</accession>
<accession>Q5U5W7</accession>
<accession>Q6ZPP2</accession>